<reference key="1">
    <citation type="journal article" date="2002" name="Mol. Microbiol.">
        <title>Genome sequence of Streptococcus agalactiae, a pathogen causing invasive neonatal disease.</title>
        <authorList>
            <person name="Glaser P."/>
            <person name="Rusniok C."/>
            <person name="Buchrieser C."/>
            <person name="Chevalier F."/>
            <person name="Frangeul L."/>
            <person name="Msadek T."/>
            <person name="Zouine M."/>
            <person name="Couve E."/>
            <person name="Lalioui L."/>
            <person name="Poyart C."/>
            <person name="Trieu-Cuot P."/>
            <person name="Kunst F."/>
        </authorList>
    </citation>
    <scope>NUCLEOTIDE SEQUENCE [LARGE SCALE GENOMIC DNA]</scope>
    <source>
        <strain>NEM316</strain>
    </source>
</reference>
<evidence type="ECO:0000250" key="1"/>
<evidence type="ECO:0000305" key="2"/>
<proteinExistence type="inferred from homology"/>
<keyword id="KW-0413">Isomerase</keyword>
<comment type="similarity">
    <text evidence="2">Belongs to the 4-oxalocrotonate tautomerase family.</text>
</comment>
<organism>
    <name type="scientific">Streptococcus agalactiae serotype III (strain NEM316)</name>
    <dbReference type="NCBI Taxonomy" id="211110"/>
    <lineage>
        <taxon>Bacteria</taxon>
        <taxon>Bacillati</taxon>
        <taxon>Bacillota</taxon>
        <taxon>Bacilli</taxon>
        <taxon>Lactobacillales</taxon>
        <taxon>Streptococcaceae</taxon>
        <taxon>Streptococcus</taxon>
    </lineage>
</organism>
<name>Y1111_STRA3</name>
<gene>
    <name type="ordered locus">gbs1111</name>
</gene>
<feature type="initiator methionine" description="Removed" evidence="1">
    <location>
        <position position="1"/>
    </location>
</feature>
<feature type="chain" id="PRO_0000209550" description="Probable tautomerase gbs1111">
    <location>
        <begin position="2"/>
        <end position="60"/>
    </location>
</feature>
<feature type="active site" description="Proton acceptor; via imino nitrogen" evidence="1">
    <location>
        <position position="2"/>
    </location>
</feature>
<accession>P67528</accession>
<accession>Q8DZM2</accession>
<accession>Q8E5C1</accession>
<protein>
    <recommendedName>
        <fullName>Probable tautomerase gbs1111</fullName>
        <ecNumber>5.3.2.-</ecNumber>
    </recommendedName>
</protein>
<sequence length="60" mass="6978">MPFVKIDLFEGRSQEQKNELAREVTEVVSRIAKAPKENIHVFINDMPEGTYYPQGELKKK</sequence>
<dbReference type="EC" id="5.3.2.-"/>
<dbReference type="EMBL" id="AL766848">
    <property type="protein sequence ID" value="CAD46770.1"/>
    <property type="molecule type" value="Genomic_DNA"/>
</dbReference>
<dbReference type="RefSeq" id="WP_001117229.1">
    <property type="nucleotide sequence ID" value="NC_004368.1"/>
</dbReference>
<dbReference type="SMR" id="P67528"/>
<dbReference type="KEGG" id="san:gbs1111"/>
<dbReference type="eggNOG" id="COG1942">
    <property type="taxonomic scope" value="Bacteria"/>
</dbReference>
<dbReference type="HOGENOM" id="CLU_148073_5_1_9"/>
<dbReference type="Proteomes" id="UP000000823">
    <property type="component" value="Chromosome"/>
</dbReference>
<dbReference type="GO" id="GO:0016853">
    <property type="term" value="F:isomerase activity"/>
    <property type="evidence" value="ECO:0007669"/>
    <property type="project" value="UniProtKB-KW"/>
</dbReference>
<dbReference type="Gene3D" id="3.30.429.10">
    <property type="entry name" value="Macrophage Migration Inhibitory Factor"/>
    <property type="match status" value="1"/>
</dbReference>
<dbReference type="InterPro" id="IPR004370">
    <property type="entry name" value="4-OT-like_dom"/>
</dbReference>
<dbReference type="InterPro" id="IPR014347">
    <property type="entry name" value="Tautomerase/MIF_sf"/>
</dbReference>
<dbReference type="NCBIfam" id="NF002571">
    <property type="entry name" value="PRK02220.1"/>
    <property type="match status" value="1"/>
</dbReference>
<dbReference type="NCBIfam" id="NF002622">
    <property type="entry name" value="PRK02289.1"/>
    <property type="match status" value="1"/>
</dbReference>
<dbReference type="PANTHER" id="PTHR35530:SF1">
    <property type="entry name" value="2-HYDROXYMUCONATE TAUTOMERASE"/>
    <property type="match status" value="1"/>
</dbReference>
<dbReference type="PANTHER" id="PTHR35530">
    <property type="entry name" value="TAUTOMERASE-RELATED"/>
    <property type="match status" value="1"/>
</dbReference>
<dbReference type="Pfam" id="PF01361">
    <property type="entry name" value="Tautomerase"/>
    <property type="match status" value="1"/>
</dbReference>
<dbReference type="SUPFAM" id="SSF55331">
    <property type="entry name" value="Tautomerase/MIF"/>
    <property type="match status" value="1"/>
</dbReference>